<reference key="1">
    <citation type="journal article" date="1996" name="Yeast">
        <title>Sequencing of a 17.6 kb segment on the right arm of yeast chromosome VII reveals 12 ORFs, including CCT, ADE3 and TR-I genes, homologues of the yeast PMT and EF1G genes, of the human and bacterial electron-transferring flavoproteins (beta-chain) and of the Escherichia coli phosphoserine phosphohydrolase, and five new ORFs.</title>
        <authorList>
            <person name="Guerreiro P."/>
            <person name="Barreiros T."/>
            <person name="Soares H."/>
            <person name="Cyrne L."/>
            <person name="Maia e Silva A."/>
            <person name="Rodrigues-Pousada C."/>
        </authorList>
    </citation>
    <scope>NUCLEOTIDE SEQUENCE [GENOMIC DNA]</scope>
    <source>
        <strain>ATCC 204508 / S288c</strain>
    </source>
</reference>
<reference key="2">
    <citation type="journal article" date="1997" name="Nature">
        <title>The nucleotide sequence of Saccharomyces cerevisiae chromosome VII.</title>
        <authorList>
            <person name="Tettelin H."/>
            <person name="Agostoni-Carbone M.L."/>
            <person name="Albermann K."/>
            <person name="Albers M."/>
            <person name="Arroyo J."/>
            <person name="Backes U."/>
            <person name="Barreiros T."/>
            <person name="Bertani I."/>
            <person name="Bjourson A.J."/>
            <person name="Brueckner M."/>
            <person name="Bruschi C.V."/>
            <person name="Carignani G."/>
            <person name="Castagnoli L."/>
            <person name="Cerdan E."/>
            <person name="Clemente M.L."/>
            <person name="Coblenz A."/>
            <person name="Coglievina M."/>
            <person name="Coissac E."/>
            <person name="Defoor E."/>
            <person name="Del Bino S."/>
            <person name="Delius H."/>
            <person name="Delneri D."/>
            <person name="de Wergifosse P."/>
            <person name="Dujon B."/>
            <person name="Durand P."/>
            <person name="Entian K.-D."/>
            <person name="Eraso P."/>
            <person name="Escribano V."/>
            <person name="Fabiani L."/>
            <person name="Fartmann B."/>
            <person name="Feroli F."/>
            <person name="Feuermann M."/>
            <person name="Frontali L."/>
            <person name="Garcia-Gonzalez M."/>
            <person name="Garcia-Saez M.I."/>
            <person name="Goffeau A."/>
            <person name="Guerreiro P."/>
            <person name="Hani J."/>
            <person name="Hansen M."/>
            <person name="Hebling U."/>
            <person name="Hernandez K."/>
            <person name="Heumann K."/>
            <person name="Hilger F."/>
            <person name="Hofmann B."/>
            <person name="Indge K.J."/>
            <person name="James C.M."/>
            <person name="Klima R."/>
            <person name="Koetter P."/>
            <person name="Kramer B."/>
            <person name="Kramer W."/>
            <person name="Lauquin G."/>
            <person name="Leuther H."/>
            <person name="Louis E.J."/>
            <person name="Maillier E."/>
            <person name="Marconi A."/>
            <person name="Martegani E."/>
            <person name="Mazon M.J."/>
            <person name="Mazzoni C."/>
            <person name="McReynolds A.D.K."/>
            <person name="Melchioretto P."/>
            <person name="Mewes H.-W."/>
            <person name="Minenkova O."/>
            <person name="Mueller-Auer S."/>
            <person name="Nawrocki A."/>
            <person name="Netter P."/>
            <person name="Neu R."/>
            <person name="Nombela C."/>
            <person name="Oliver S.G."/>
            <person name="Panzeri L."/>
            <person name="Paoluzi S."/>
            <person name="Plevani P."/>
            <person name="Portetelle D."/>
            <person name="Portillo F."/>
            <person name="Potier S."/>
            <person name="Purnelle B."/>
            <person name="Rieger M."/>
            <person name="Riles L."/>
            <person name="Rinaldi T."/>
            <person name="Robben J."/>
            <person name="Rodrigues-Pousada C."/>
            <person name="Rodriguez-Belmonte E."/>
            <person name="Rodriguez-Torres A.M."/>
            <person name="Rose M."/>
            <person name="Ruzzi M."/>
            <person name="Saliola M."/>
            <person name="Sanchez-Perez M."/>
            <person name="Schaefer B."/>
            <person name="Schaefer M."/>
            <person name="Scharfe M."/>
            <person name="Schmidheini T."/>
            <person name="Schreer A."/>
            <person name="Skala J."/>
            <person name="Souciet J.-L."/>
            <person name="Steensma H.Y."/>
            <person name="Talla E."/>
            <person name="Thierry A."/>
            <person name="Vandenbol M."/>
            <person name="van der Aart Q.J.M."/>
            <person name="Van Dyck L."/>
            <person name="Vanoni M."/>
            <person name="Verhasselt P."/>
            <person name="Voet M."/>
            <person name="Volckaert G."/>
            <person name="Wambutt R."/>
            <person name="Watson M.D."/>
            <person name="Weber N."/>
            <person name="Wedler E."/>
            <person name="Wedler H."/>
            <person name="Wipfli P."/>
            <person name="Wolf K."/>
            <person name="Wright L.F."/>
            <person name="Zaccaria P."/>
            <person name="Zimmermann M."/>
            <person name="Zollner A."/>
            <person name="Kleine K."/>
        </authorList>
    </citation>
    <scope>NUCLEOTIDE SEQUENCE [LARGE SCALE GENOMIC DNA]</scope>
    <source>
        <strain>ATCC 204508 / S288c</strain>
    </source>
</reference>
<reference key="3">
    <citation type="journal article" date="2014" name="G3 (Bethesda)">
        <title>The reference genome sequence of Saccharomyces cerevisiae: Then and now.</title>
        <authorList>
            <person name="Engel S.R."/>
            <person name="Dietrich F.S."/>
            <person name="Fisk D.G."/>
            <person name="Binkley G."/>
            <person name="Balakrishnan R."/>
            <person name="Costanzo M.C."/>
            <person name="Dwight S.S."/>
            <person name="Hitz B.C."/>
            <person name="Karra K."/>
            <person name="Nash R.S."/>
            <person name="Weng S."/>
            <person name="Wong E.D."/>
            <person name="Lloyd P."/>
            <person name="Skrzypek M.S."/>
            <person name="Miyasato S.R."/>
            <person name="Simison M."/>
            <person name="Cherry J.M."/>
        </authorList>
    </citation>
    <scope>GENOME REANNOTATION</scope>
    <source>
        <strain>ATCC 204508 / S288c</strain>
    </source>
</reference>
<reference key="4">
    <citation type="journal article" date="2003" name="Nature">
        <title>Sequencing and comparison of yeast species to identify genes and regulatory elements.</title>
        <authorList>
            <person name="Kellis M."/>
            <person name="Patterson N."/>
            <person name="Endrizzi M."/>
            <person name="Birren B.W."/>
            <person name="Lander E.S."/>
        </authorList>
    </citation>
    <scope>IDENTIFICATION OF PROBABLE INITIATION SITE</scope>
</reference>
<gene>
    <name type="ordered locus">YGR201C</name>
    <name type="ORF">G7727</name>
</gene>
<sequence length="225" mass="26297">MSDGTLFTDLKERKLIRTIVPRGLVRSLKLDVKLADPSDAQQLYEREFPLRKYPTFVGPHDEWTLTEAMAIDYYLIHLSSDKEAVRQLLGPEGDFKTRADILRWESLSNSDFLNEVCEVFFPLIGVKPYNATEFKAARENVDTIVSLYEKRLKKQQYLVCDDHETLADLISAAAFSLGFISFFDETWRSKHPEVTRWFNRVIKSRFFEGEFESFKMCETEMQPIK</sequence>
<proteinExistence type="predicted"/>
<comment type="sequence caution" evidence="1">
    <conflict type="erroneous initiation">
        <sequence resource="EMBL-CDS" id="CAA97228"/>
    </conflict>
</comment>
<accession>P42936</accession>
<accession>D6VUY3</accession>
<feature type="chain" id="PRO_0000186046" description="Putative elongation factor 1 gamma homolog">
    <location>
        <begin position="1"/>
        <end position="225"/>
    </location>
</feature>
<feature type="domain" description="GST C-terminal">
    <location>
        <begin position="94"/>
        <end position="225"/>
    </location>
</feature>
<name>YG4D_YEAST</name>
<evidence type="ECO:0000305" key="1"/>
<organism>
    <name type="scientific">Saccharomyces cerevisiae (strain ATCC 204508 / S288c)</name>
    <name type="common">Baker's yeast</name>
    <dbReference type="NCBI Taxonomy" id="559292"/>
    <lineage>
        <taxon>Eukaryota</taxon>
        <taxon>Fungi</taxon>
        <taxon>Dikarya</taxon>
        <taxon>Ascomycota</taxon>
        <taxon>Saccharomycotina</taxon>
        <taxon>Saccharomycetes</taxon>
        <taxon>Saccharomycetales</taxon>
        <taxon>Saccharomycetaceae</taxon>
        <taxon>Saccharomyces</taxon>
    </lineage>
</organism>
<protein>
    <recommendedName>
        <fullName>Putative elongation factor 1 gamma homolog</fullName>
    </recommendedName>
</protein>
<keyword id="KW-1185">Reference proteome</keyword>
<dbReference type="EMBL" id="Z49133">
    <property type="protein sequence ID" value="CAA88994.1"/>
    <property type="molecule type" value="Genomic_DNA"/>
</dbReference>
<dbReference type="EMBL" id="Z72986">
    <property type="protein sequence ID" value="CAA97228.1"/>
    <property type="status" value="ALT_INIT"/>
    <property type="molecule type" value="Genomic_DNA"/>
</dbReference>
<dbReference type="EMBL" id="BK006941">
    <property type="protein sequence ID" value="DAA08294.1"/>
    <property type="molecule type" value="Genomic_DNA"/>
</dbReference>
<dbReference type="PIR" id="S64523">
    <property type="entry name" value="S64523"/>
</dbReference>
<dbReference type="RefSeq" id="NP_011717.4">
    <property type="nucleotide sequence ID" value="NM_001181330.3"/>
</dbReference>
<dbReference type="SMR" id="P42936"/>
<dbReference type="BioGRID" id="33454">
    <property type="interactions" value="19"/>
</dbReference>
<dbReference type="DIP" id="DIP-4901N"/>
<dbReference type="FunCoup" id="P42936">
    <property type="interactions" value="38"/>
</dbReference>
<dbReference type="IntAct" id="P42936">
    <property type="interactions" value="2"/>
</dbReference>
<dbReference type="STRING" id="4932.YGR201C"/>
<dbReference type="PaxDb" id="4932-YGR201C"/>
<dbReference type="PeptideAtlas" id="P42936"/>
<dbReference type="EnsemblFungi" id="YGR201C_mRNA">
    <property type="protein sequence ID" value="YGR201C"/>
    <property type="gene ID" value="YGR201C"/>
</dbReference>
<dbReference type="GeneID" id="853115"/>
<dbReference type="KEGG" id="sce:YGR201C"/>
<dbReference type="AGR" id="SGD:S000003433"/>
<dbReference type="SGD" id="S000003433">
    <property type="gene designation" value="YGR201C"/>
</dbReference>
<dbReference type="VEuPathDB" id="FungiDB:YGR201C"/>
<dbReference type="eggNOG" id="KOG0867">
    <property type="taxonomic scope" value="Eukaryota"/>
</dbReference>
<dbReference type="GeneTree" id="ENSGT00940000176354"/>
<dbReference type="HOGENOM" id="CLU_011226_3_2_1"/>
<dbReference type="InParanoid" id="P42936"/>
<dbReference type="OMA" id="WICYAQG"/>
<dbReference type="OrthoDB" id="249703at2759"/>
<dbReference type="BioCyc" id="YEAST:G3O-30886-MONOMER"/>
<dbReference type="BioGRID-ORCS" id="853115">
    <property type="hits" value="0 hits in 10 CRISPR screens"/>
</dbReference>
<dbReference type="PRO" id="PR:P42936"/>
<dbReference type="Proteomes" id="UP000002311">
    <property type="component" value="Chromosome VII"/>
</dbReference>
<dbReference type="RNAct" id="P42936">
    <property type="molecule type" value="protein"/>
</dbReference>
<dbReference type="GO" id="GO:0005737">
    <property type="term" value="C:cytoplasm"/>
    <property type="evidence" value="ECO:0000318"/>
    <property type="project" value="GO_Central"/>
</dbReference>
<dbReference type="GO" id="GO:0005634">
    <property type="term" value="C:nucleus"/>
    <property type="evidence" value="ECO:0000318"/>
    <property type="project" value="GO_Central"/>
</dbReference>
<dbReference type="GO" id="GO:0006414">
    <property type="term" value="P:translational elongation"/>
    <property type="evidence" value="ECO:0000318"/>
    <property type="project" value="GO_Central"/>
</dbReference>
<dbReference type="CDD" id="cd03181">
    <property type="entry name" value="GST_C_EF1Bgamma_like"/>
    <property type="match status" value="1"/>
</dbReference>
<dbReference type="FunFam" id="1.20.1050.10:FF:000006">
    <property type="entry name" value="Elongation factor 1 gamma"/>
    <property type="match status" value="1"/>
</dbReference>
<dbReference type="FunFam" id="3.40.30.10:FF:000375">
    <property type="entry name" value="YGR201C-like protein"/>
    <property type="match status" value="1"/>
</dbReference>
<dbReference type="Gene3D" id="1.20.1050.10">
    <property type="match status" value="1"/>
</dbReference>
<dbReference type="Gene3D" id="3.40.30.10">
    <property type="entry name" value="Glutaredoxin"/>
    <property type="match status" value="1"/>
</dbReference>
<dbReference type="InterPro" id="IPR050802">
    <property type="entry name" value="EF-GSTs"/>
</dbReference>
<dbReference type="InterPro" id="IPR010987">
    <property type="entry name" value="Glutathione-S-Trfase_C-like"/>
</dbReference>
<dbReference type="InterPro" id="IPR036282">
    <property type="entry name" value="Glutathione-S-Trfase_C_sf"/>
</dbReference>
<dbReference type="InterPro" id="IPR004045">
    <property type="entry name" value="Glutathione_S-Trfase_N"/>
</dbReference>
<dbReference type="InterPro" id="IPR004046">
    <property type="entry name" value="GST_C"/>
</dbReference>
<dbReference type="InterPro" id="IPR036249">
    <property type="entry name" value="Thioredoxin-like_sf"/>
</dbReference>
<dbReference type="PANTHER" id="PTHR43986">
    <property type="entry name" value="ELONGATION FACTOR 1-GAMMA"/>
    <property type="match status" value="1"/>
</dbReference>
<dbReference type="PANTHER" id="PTHR43986:SF1">
    <property type="entry name" value="ELONGATION FACTOR 1-GAMMA"/>
    <property type="match status" value="1"/>
</dbReference>
<dbReference type="Pfam" id="PF00043">
    <property type="entry name" value="GST_C"/>
    <property type="match status" value="1"/>
</dbReference>
<dbReference type="Pfam" id="PF02798">
    <property type="entry name" value="GST_N"/>
    <property type="match status" value="1"/>
</dbReference>
<dbReference type="SUPFAM" id="SSF47616">
    <property type="entry name" value="GST C-terminal domain-like"/>
    <property type="match status" value="1"/>
</dbReference>
<dbReference type="SUPFAM" id="SSF52833">
    <property type="entry name" value="Thioredoxin-like"/>
    <property type="match status" value="1"/>
</dbReference>
<dbReference type="PROSITE" id="PS50405">
    <property type="entry name" value="GST_CTER"/>
    <property type="match status" value="1"/>
</dbReference>